<dbReference type="EMBL" id="AY278023">
    <property type="protein sequence ID" value="AAP78944.1"/>
    <property type="molecule type" value="mRNA"/>
</dbReference>
<dbReference type="EMBL" id="AY278024">
    <property type="protein sequence ID" value="AAP78945.1"/>
    <property type="molecule type" value="mRNA"/>
</dbReference>
<dbReference type="EMBL" id="AL160408">
    <property type="status" value="NOT_ANNOTATED_CDS"/>
    <property type="molecule type" value="Genomic_DNA"/>
</dbReference>
<dbReference type="EMBL" id="BC020516">
    <property type="protein sequence ID" value="AAH20516.1"/>
    <property type="molecule type" value="mRNA"/>
</dbReference>
<dbReference type="EMBL" id="BC065759">
    <property type="protein sequence ID" value="AAH65759.1"/>
    <property type="molecule type" value="mRNA"/>
</dbReference>
<dbReference type="CCDS" id="CCDS1602.1">
    <molecule id="Q7Z5L9-1"/>
</dbReference>
<dbReference type="CCDS" id="CCDS41475.1">
    <molecule id="Q7Z5L9-2"/>
</dbReference>
<dbReference type="RefSeq" id="NP_001070865.1">
    <molecule id="Q7Z5L9-2"/>
    <property type="nucleotide sequence ID" value="NM_001077397.1"/>
</dbReference>
<dbReference type="RefSeq" id="NP_892017.2">
    <molecule id="Q7Z5L9-1"/>
    <property type="nucleotide sequence ID" value="NM_182972.3"/>
</dbReference>
<dbReference type="PDB" id="8YTF">
    <property type="method" value="X-ray"/>
    <property type="resolution" value="1.59 A"/>
    <property type="chains" value="A=497-578"/>
</dbReference>
<dbReference type="PDB" id="8YTG">
    <property type="method" value="X-ray"/>
    <property type="resolution" value="1.45 A"/>
    <property type="chains" value="A=497-578"/>
</dbReference>
<dbReference type="PDB" id="8YTH">
    <property type="method" value="X-ray"/>
    <property type="resolution" value="2.40 A"/>
    <property type="chains" value="A=497-578"/>
</dbReference>
<dbReference type="PDBsum" id="8YTF"/>
<dbReference type="PDBsum" id="8YTG"/>
<dbReference type="PDBsum" id="8YTH"/>
<dbReference type="SMR" id="Q7Z5L9"/>
<dbReference type="BioGRID" id="131797">
    <property type="interactions" value="118"/>
</dbReference>
<dbReference type="CORUM" id="Q7Z5L9"/>
<dbReference type="FunCoup" id="Q7Z5L9">
    <property type="interactions" value="3335"/>
</dbReference>
<dbReference type="IntAct" id="Q7Z5L9">
    <property type="interactions" value="38"/>
</dbReference>
<dbReference type="MINT" id="Q7Z5L9"/>
<dbReference type="STRING" id="9606.ENSP00000355568"/>
<dbReference type="GlyCosmos" id="Q7Z5L9">
    <property type="glycosylation" value="12 sites, 2 glycans"/>
</dbReference>
<dbReference type="GlyGen" id="Q7Z5L9">
    <property type="glycosylation" value="16 sites, 2 O-linked glycans (15 sites)"/>
</dbReference>
<dbReference type="iPTMnet" id="Q7Z5L9"/>
<dbReference type="PhosphoSitePlus" id="Q7Z5L9"/>
<dbReference type="BioMuta" id="IRF2BP2"/>
<dbReference type="DMDM" id="229462882"/>
<dbReference type="jPOST" id="Q7Z5L9"/>
<dbReference type="MassIVE" id="Q7Z5L9"/>
<dbReference type="PaxDb" id="9606-ENSP00000355568"/>
<dbReference type="PeptideAtlas" id="Q7Z5L9"/>
<dbReference type="ProteomicsDB" id="69325">
    <molecule id="Q7Z5L9-1"/>
</dbReference>
<dbReference type="ProteomicsDB" id="69326">
    <molecule id="Q7Z5L9-2"/>
</dbReference>
<dbReference type="ProteomicsDB" id="69327">
    <molecule id="Q7Z5L9-3"/>
</dbReference>
<dbReference type="Pumba" id="Q7Z5L9"/>
<dbReference type="TopDownProteomics" id="Q7Z5L9-2">
    <molecule id="Q7Z5L9-2"/>
</dbReference>
<dbReference type="TopDownProteomics" id="Q7Z5L9-3">
    <molecule id="Q7Z5L9-3"/>
</dbReference>
<dbReference type="Antibodypedia" id="34693">
    <property type="antibodies" value="214 antibodies from 29 providers"/>
</dbReference>
<dbReference type="DNASU" id="359948"/>
<dbReference type="Ensembl" id="ENST00000366609.4">
    <molecule id="Q7Z5L9-1"/>
    <property type="protein sequence ID" value="ENSP00000355568.3"/>
    <property type="gene ID" value="ENSG00000168264.12"/>
</dbReference>
<dbReference type="Ensembl" id="ENST00000366610.8">
    <molecule id="Q7Z5L9-2"/>
    <property type="protein sequence ID" value="ENSP00000355569.3"/>
    <property type="gene ID" value="ENSG00000168264.12"/>
</dbReference>
<dbReference type="GeneID" id="359948"/>
<dbReference type="KEGG" id="hsa:359948"/>
<dbReference type="MANE-Select" id="ENST00000366609.4">
    <property type="protein sequence ID" value="ENSP00000355568.3"/>
    <property type="RefSeq nucleotide sequence ID" value="NM_182972.3"/>
    <property type="RefSeq protein sequence ID" value="NP_892017.2"/>
</dbReference>
<dbReference type="UCSC" id="uc001hwf.3">
    <molecule id="Q7Z5L9-1"/>
    <property type="organism name" value="human"/>
</dbReference>
<dbReference type="AGR" id="HGNC:21729"/>
<dbReference type="CTD" id="359948"/>
<dbReference type="DisGeNET" id="359948"/>
<dbReference type="GeneCards" id="IRF2BP2"/>
<dbReference type="HGNC" id="HGNC:21729">
    <property type="gene designation" value="IRF2BP2"/>
</dbReference>
<dbReference type="HPA" id="ENSG00000168264">
    <property type="expression patterns" value="Low tissue specificity"/>
</dbReference>
<dbReference type="MalaCards" id="IRF2BP2"/>
<dbReference type="MIM" id="615332">
    <property type="type" value="gene"/>
</dbReference>
<dbReference type="MIM" id="617765">
    <property type="type" value="phenotype"/>
</dbReference>
<dbReference type="neXtProt" id="NX_Q7Z5L9"/>
<dbReference type="OpenTargets" id="ENSG00000168264"/>
<dbReference type="Orphanet" id="520">
    <property type="disease" value="Acute promyelocytic leukemia"/>
</dbReference>
<dbReference type="Orphanet" id="1572">
    <property type="disease" value="Common variable immunodeficiency"/>
</dbReference>
<dbReference type="PharmGKB" id="PA134947294"/>
<dbReference type="VEuPathDB" id="HostDB:ENSG00000168264"/>
<dbReference type="eggNOG" id="KOG3579">
    <property type="taxonomic scope" value="Eukaryota"/>
</dbReference>
<dbReference type="GeneTree" id="ENSGT00940000160591"/>
<dbReference type="HOGENOM" id="CLU_019307_2_0_1"/>
<dbReference type="InParanoid" id="Q7Z5L9"/>
<dbReference type="OMA" id="FKKEPGM"/>
<dbReference type="OrthoDB" id="10065080at2759"/>
<dbReference type="PAN-GO" id="Q7Z5L9">
    <property type="GO annotations" value="3 GO annotations based on evolutionary models"/>
</dbReference>
<dbReference type="PhylomeDB" id="Q7Z5L9"/>
<dbReference type="TreeFam" id="TF317075"/>
<dbReference type="PathwayCommons" id="Q7Z5L9"/>
<dbReference type="SignaLink" id="Q7Z5L9"/>
<dbReference type="SIGNOR" id="Q7Z5L9"/>
<dbReference type="BioGRID-ORCS" id="359948">
    <property type="hits" value="98 hits in 1171 CRISPR screens"/>
</dbReference>
<dbReference type="ChiTaRS" id="IRF2BP2">
    <property type="organism name" value="human"/>
</dbReference>
<dbReference type="GenomeRNAi" id="359948"/>
<dbReference type="Pharos" id="Q7Z5L9">
    <property type="development level" value="Tbio"/>
</dbReference>
<dbReference type="PRO" id="PR:Q7Z5L9"/>
<dbReference type="Proteomes" id="UP000005640">
    <property type="component" value="Chromosome 1"/>
</dbReference>
<dbReference type="RNAct" id="Q7Z5L9">
    <property type="molecule type" value="protein"/>
</dbReference>
<dbReference type="Bgee" id="ENSG00000168264">
    <property type="expression patterns" value="Expressed in epithelium of mammary gland and 196 other cell types or tissues"/>
</dbReference>
<dbReference type="GO" id="GO:0005737">
    <property type="term" value="C:cytoplasm"/>
    <property type="evidence" value="ECO:0007669"/>
    <property type="project" value="UniProtKB-SubCell"/>
</dbReference>
<dbReference type="GO" id="GO:0005654">
    <property type="term" value="C:nucleoplasm"/>
    <property type="evidence" value="ECO:0000314"/>
    <property type="project" value="HPA"/>
</dbReference>
<dbReference type="GO" id="GO:0005634">
    <property type="term" value="C:nucleus"/>
    <property type="evidence" value="ECO:0000314"/>
    <property type="project" value="MGI"/>
</dbReference>
<dbReference type="GO" id="GO:0003714">
    <property type="term" value="F:transcription corepressor activity"/>
    <property type="evidence" value="ECO:0000314"/>
    <property type="project" value="MGI"/>
</dbReference>
<dbReference type="GO" id="GO:0008270">
    <property type="term" value="F:zinc ion binding"/>
    <property type="evidence" value="ECO:0007669"/>
    <property type="project" value="UniProtKB-KW"/>
</dbReference>
<dbReference type="GO" id="GO:0002327">
    <property type="term" value="P:immature B cell differentiation"/>
    <property type="evidence" value="ECO:0000314"/>
    <property type="project" value="UniProtKB"/>
</dbReference>
<dbReference type="GO" id="GO:0000122">
    <property type="term" value="P:negative regulation of transcription by RNA polymerase II"/>
    <property type="evidence" value="ECO:0000314"/>
    <property type="project" value="MGI"/>
</dbReference>
<dbReference type="GO" id="GO:0006357">
    <property type="term" value="P:regulation of transcription by RNA polymerase II"/>
    <property type="evidence" value="ECO:0000318"/>
    <property type="project" value="GO_Central"/>
</dbReference>
<dbReference type="CDD" id="cd16716">
    <property type="entry name" value="vRING-HC_IRF2BP2"/>
    <property type="match status" value="1"/>
</dbReference>
<dbReference type="FunFam" id="1.10.10.1580:FF:000001">
    <property type="entry name" value="interferon regulatory factor 2-binding protein 2"/>
    <property type="match status" value="1"/>
</dbReference>
<dbReference type="Gene3D" id="1.10.10.1580">
    <property type="entry name" value="Interferon regulatory factor 2-binding protein"/>
    <property type="match status" value="1"/>
</dbReference>
<dbReference type="InterPro" id="IPR044882">
    <property type="entry name" value="I2BP1/2_C3HC4-RING_sf"/>
</dbReference>
<dbReference type="InterPro" id="IPR022750">
    <property type="entry name" value="Interferon_reg_fac2-bd1_2_Znf"/>
</dbReference>
<dbReference type="PANTHER" id="PTHR10816:SF18">
    <property type="entry name" value="INTERFERON REGULATORY FACTOR 2-BINDING PROTEIN 2"/>
    <property type="match status" value="1"/>
</dbReference>
<dbReference type="PANTHER" id="PTHR10816">
    <property type="entry name" value="MYELIN TRANSCRIPTION FACTOR 1-RELATED"/>
    <property type="match status" value="1"/>
</dbReference>
<dbReference type="Pfam" id="PF11261">
    <property type="entry name" value="IRF-2BP1_2"/>
    <property type="match status" value="1"/>
</dbReference>
<dbReference type="Pfam" id="PF25457">
    <property type="entry name" value="IRF-2BP1_2_M"/>
    <property type="match status" value="1"/>
</dbReference>
<dbReference type="Pfam" id="PF25454">
    <property type="entry name" value="zf-C3HC4_IRF-2BP1_2"/>
    <property type="match status" value="1"/>
</dbReference>
<dbReference type="SUPFAM" id="SSF57850">
    <property type="entry name" value="RING/U-box"/>
    <property type="match status" value="1"/>
</dbReference>
<protein>
    <recommendedName>
        <fullName>Interferon regulatory factor 2-binding protein 2</fullName>
        <shortName>IRF-2-binding protein 2</shortName>
        <shortName>IRF-2BP2</shortName>
    </recommendedName>
</protein>
<reference key="1">
    <citation type="journal article" date="2003" name="Nucleic Acids Res.">
        <title>Identification of novel co-repressor molecules for interferon regulatory factor-2.</title>
        <authorList>
            <person name="Childs K.S."/>
            <person name="Goodbourn S."/>
        </authorList>
    </citation>
    <scope>NUCLEOTIDE SEQUENCE [MRNA] (ISOFORMS 1 AND 2)</scope>
    <scope>FUNCTION</scope>
    <scope>INTERACTION WITH IRF2</scope>
    <scope>SUBCELLULAR LOCATION</scope>
</reference>
<reference key="2">
    <citation type="journal article" date="2006" name="Nature">
        <title>The DNA sequence and biological annotation of human chromosome 1.</title>
        <authorList>
            <person name="Gregory S.G."/>
            <person name="Barlow K.F."/>
            <person name="McLay K.E."/>
            <person name="Kaul R."/>
            <person name="Swarbreck D."/>
            <person name="Dunham A."/>
            <person name="Scott C.E."/>
            <person name="Howe K.L."/>
            <person name="Woodfine K."/>
            <person name="Spencer C.C.A."/>
            <person name="Jones M.C."/>
            <person name="Gillson C."/>
            <person name="Searle S."/>
            <person name="Zhou Y."/>
            <person name="Kokocinski F."/>
            <person name="McDonald L."/>
            <person name="Evans R."/>
            <person name="Phillips K."/>
            <person name="Atkinson A."/>
            <person name="Cooper R."/>
            <person name="Jones C."/>
            <person name="Hall R.E."/>
            <person name="Andrews T.D."/>
            <person name="Lloyd C."/>
            <person name="Ainscough R."/>
            <person name="Almeida J.P."/>
            <person name="Ambrose K.D."/>
            <person name="Anderson F."/>
            <person name="Andrew R.W."/>
            <person name="Ashwell R.I.S."/>
            <person name="Aubin K."/>
            <person name="Babbage A.K."/>
            <person name="Bagguley C.L."/>
            <person name="Bailey J."/>
            <person name="Beasley H."/>
            <person name="Bethel G."/>
            <person name="Bird C.P."/>
            <person name="Bray-Allen S."/>
            <person name="Brown J.Y."/>
            <person name="Brown A.J."/>
            <person name="Buckley D."/>
            <person name="Burton J."/>
            <person name="Bye J."/>
            <person name="Carder C."/>
            <person name="Chapman J.C."/>
            <person name="Clark S.Y."/>
            <person name="Clarke G."/>
            <person name="Clee C."/>
            <person name="Cobley V."/>
            <person name="Collier R.E."/>
            <person name="Corby N."/>
            <person name="Coville G.J."/>
            <person name="Davies J."/>
            <person name="Deadman R."/>
            <person name="Dunn M."/>
            <person name="Earthrowl M."/>
            <person name="Ellington A.G."/>
            <person name="Errington H."/>
            <person name="Frankish A."/>
            <person name="Frankland J."/>
            <person name="French L."/>
            <person name="Garner P."/>
            <person name="Garnett J."/>
            <person name="Gay L."/>
            <person name="Ghori M.R.J."/>
            <person name="Gibson R."/>
            <person name="Gilby L.M."/>
            <person name="Gillett W."/>
            <person name="Glithero R.J."/>
            <person name="Grafham D.V."/>
            <person name="Griffiths C."/>
            <person name="Griffiths-Jones S."/>
            <person name="Grocock R."/>
            <person name="Hammond S."/>
            <person name="Harrison E.S.I."/>
            <person name="Hart E."/>
            <person name="Haugen E."/>
            <person name="Heath P.D."/>
            <person name="Holmes S."/>
            <person name="Holt K."/>
            <person name="Howden P.J."/>
            <person name="Hunt A.R."/>
            <person name="Hunt S.E."/>
            <person name="Hunter G."/>
            <person name="Isherwood J."/>
            <person name="James R."/>
            <person name="Johnson C."/>
            <person name="Johnson D."/>
            <person name="Joy A."/>
            <person name="Kay M."/>
            <person name="Kershaw J.K."/>
            <person name="Kibukawa M."/>
            <person name="Kimberley A.M."/>
            <person name="King A."/>
            <person name="Knights A.J."/>
            <person name="Lad H."/>
            <person name="Laird G."/>
            <person name="Lawlor S."/>
            <person name="Leongamornlert D.A."/>
            <person name="Lloyd D.M."/>
            <person name="Loveland J."/>
            <person name="Lovell J."/>
            <person name="Lush M.J."/>
            <person name="Lyne R."/>
            <person name="Martin S."/>
            <person name="Mashreghi-Mohammadi M."/>
            <person name="Matthews L."/>
            <person name="Matthews N.S.W."/>
            <person name="McLaren S."/>
            <person name="Milne S."/>
            <person name="Mistry S."/>
            <person name="Moore M.J.F."/>
            <person name="Nickerson T."/>
            <person name="O'Dell C.N."/>
            <person name="Oliver K."/>
            <person name="Palmeiri A."/>
            <person name="Palmer S.A."/>
            <person name="Parker A."/>
            <person name="Patel D."/>
            <person name="Pearce A.V."/>
            <person name="Peck A.I."/>
            <person name="Pelan S."/>
            <person name="Phelps K."/>
            <person name="Phillimore B.J."/>
            <person name="Plumb R."/>
            <person name="Rajan J."/>
            <person name="Raymond C."/>
            <person name="Rouse G."/>
            <person name="Saenphimmachak C."/>
            <person name="Sehra H.K."/>
            <person name="Sheridan E."/>
            <person name="Shownkeen R."/>
            <person name="Sims S."/>
            <person name="Skuce C.D."/>
            <person name="Smith M."/>
            <person name="Steward C."/>
            <person name="Subramanian S."/>
            <person name="Sycamore N."/>
            <person name="Tracey A."/>
            <person name="Tromans A."/>
            <person name="Van Helmond Z."/>
            <person name="Wall M."/>
            <person name="Wallis J.M."/>
            <person name="White S."/>
            <person name="Whitehead S.L."/>
            <person name="Wilkinson J.E."/>
            <person name="Willey D.L."/>
            <person name="Williams H."/>
            <person name="Wilming L."/>
            <person name="Wray P.W."/>
            <person name="Wu Z."/>
            <person name="Coulson A."/>
            <person name="Vaudin M."/>
            <person name="Sulston J.E."/>
            <person name="Durbin R.M."/>
            <person name="Hubbard T."/>
            <person name="Wooster R."/>
            <person name="Dunham I."/>
            <person name="Carter N.P."/>
            <person name="McVean G."/>
            <person name="Ross M.T."/>
            <person name="Harrow J."/>
            <person name="Olson M.V."/>
            <person name="Beck S."/>
            <person name="Rogers J."/>
            <person name="Bentley D.R."/>
        </authorList>
    </citation>
    <scope>NUCLEOTIDE SEQUENCE [LARGE SCALE GENOMIC DNA]</scope>
</reference>
<reference key="3">
    <citation type="journal article" date="2004" name="Genome Res.">
        <title>The status, quality, and expansion of the NIH full-length cDNA project: the Mammalian Gene Collection (MGC).</title>
        <authorList>
            <consortium name="The MGC Project Team"/>
        </authorList>
    </citation>
    <scope>NUCLEOTIDE SEQUENCE [LARGE SCALE MRNA] (ISOFORM 3)</scope>
    <scope>NUCLEOTIDE SEQUENCE [LARGE SCALE MRNA] OF 362-587 (ISOFORMS 1/2)</scope>
    <source>
        <tissue>Lung</tissue>
    </source>
</reference>
<reference key="4">
    <citation type="journal article" date="2006" name="Cell">
        <title>Global, in vivo, and site-specific phosphorylation dynamics in signaling networks.</title>
        <authorList>
            <person name="Olsen J.V."/>
            <person name="Blagoev B."/>
            <person name="Gnad F."/>
            <person name="Macek B."/>
            <person name="Kumar C."/>
            <person name="Mortensen P."/>
            <person name="Mann M."/>
        </authorList>
    </citation>
    <scope>PHOSPHORYLATION [LARGE SCALE ANALYSIS] AT SER-175 AND SER-360</scope>
    <scope>IDENTIFICATION BY MASS SPECTROMETRY [LARGE SCALE ANALYSIS]</scope>
    <source>
        <tissue>Cervix carcinoma</tissue>
    </source>
</reference>
<reference key="5">
    <citation type="journal article" date="2007" name="J. Proteome Res.">
        <title>Improved titanium dioxide enrichment of phosphopeptides from HeLa cells and high confident phosphopeptide identification by cross-validation of MS/MS and MS/MS/MS spectra.</title>
        <authorList>
            <person name="Yu L.R."/>
            <person name="Zhu Z."/>
            <person name="Chan K.C."/>
            <person name="Issaq H.J."/>
            <person name="Dimitrov D.S."/>
            <person name="Veenstra T.D."/>
        </authorList>
    </citation>
    <scope>IDENTIFICATION BY MASS SPECTROMETRY [LARGE SCALE ANALYSIS]</scope>
    <source>
        <tissue>Cervix carcinoma</tissue>
    </source>
</reference>
<reference key="6">
    <citation type="journal article" date="2008" name="J. Proteome Res.">
        <title>Combining protein-based IMAC, peptide-based IMAC, and MudPIT for efficient phosphoproteomic analysis.</title>
        <authorList>
            <person name="Cantin G.T."/>
            <person name="Yi W."/>
            <person name="Lu B."/>
            <person name="Park S.K."/>
            <person name="Xu T."/>
            <person name="Lee J.-D."/>
            <person name="Yates J.R. III"/>
        </authorList>
    </citation>
    <scope>IDENTIFICATION BY MASS SPECTROMETRY [LARGE SCALE ANALYSIS]</scope>
    <source>
        <tissue>Cervix carcinoma</tissue>
    </source>
</reference>
<reference key="7">
    <citation type="journal article" date="2008" name="Proc. Natl. Acad. Sci. U.S.A.">
        <title>A quantitative atlas of mitotic phosphorylation.</title>
        <authorList>
            <person name="Dephoure N."/>
            <person name="Zhou C."/>
            <person name="Villen J."/>
            <person name="Beausoleil S.A."/>
            <person name="Bakalarski C.E."/>
            <person name="Elledge S.J."/>
            <person name="Gygi S.P."/>
        </authorList>
    </citation>
    <scope>PHOSPHORYLATION [LARGE SCALE ANALYSIS] AT SER-455; SER-457 AND SER-460</scope>
    <scope>IDENTIFICATION BY MASS SPECTROMETRY [LARGE SCALE ANALYSIS]</scope>
    <source>
        <tissue>Cervix carcinoma</tissue>
    </source>
</reference>
<reference key="8">
    <citation type="journal article" date="2009" name="Anal. Chem.">
        <title>Lys-N and trypsin cover complementary parts of the phosphoproteome in a refined SCX-based approach.</title>
        <authorList>
            <person name="Gauci S."/>
            <person name="Helbig A.O."/>
            <person name="Slijper M."/>
            <person name="Krijgsveld J."/>
            <person name="Heck A.J."/>
            <person name="Mohammed S."/>
        </authorList>
    </citation>
    <scope>ACETYLATION [LARGE SCALE ANALYSIS] AT ALA-2</scope>
    <scope>CLEAVAGE OF INITIATOR METHIONINE [LARGE SCALE ANALYSIS]</scope>
    <scope>IDENTIFICATION BY MASS SPECTROMETRY [LARGE SCALE ANALYSIS]</scope>
</reference>
<reference key="9">
    <citation type="journal article" date="2009" name="Sci. Signal.">
        <title>Quantitative phosphoproteomic analysis of T cell receptor signaling reveals system-wide modulation of protein-protein interactions.</title>
        <authorList>
            <person name="Mayya V."/>
            <person name="Lundgren D.H."/>
            <person name="Hwang S.-I."/>
            <person name="Rezaul K."/>
            <person name="Wu L."/>
            <person name="Eng J.K."/>
            <person name="Rodionov V."/>
            <person name="Han D.K."/>
        </authorList>
    </citation>
    <scope>PHOSPHORYLATION [LARGE SCALE ANALYSIS] AT SER-360</scope>
    <scope>IDENTIFICATION BY MASS SPECTROMETRY [LARGE SCALE ANALYSIS]</scope>
    <source>
        <tissue>Leukemic T-cell</tissue>
    </source>
</reference>
<reference key="10">
    <citation type="journal article" date="2010" name="FASEB J.">
        <title>IRF2BP2 is a skeletal and cardiac muscle-enriched ischemia-inducible activator of VEGFA expression.</title>
        <authorList>
            <person name="Teng A.C."/>
            <person name="Kuraitis D."/>
            <person name="Deeke S.A."/>
            <person name="Ahmadi A."/>
            <person name="Dugan S.G."/>
            <person name="Cheng B.L."/>
            <person name="Crowson M.G."/>
            <person name="Burgon P.G."/>
            <person name="Suuronen E.J."/>
            <person name="Chen H.H."/>
            <person name="Stewart A.F."/>
        </authorList>
    </citation>
    <scope>FUNCTION</scope>
    <scope>INTERACTION WITH VGLL4</scope>
    <scope>SUBCELLULAR LOCATION</scope>
</reference>
<reference key="11">
    <citation type="journal article" date="2010" name="Sci. Signal.">
        <title>Quantitative phosphoproteomics reveals widespread full phosphorylation site occupancy during mitosis.</title>
        <authorList>
            <person name="Olsen J.V."/>
            <person name="Vermeulen M."/>
            <person name="Santamaria A."/>
            <person name="Kumar C."/>
            <person name="Miller M.L."/>
            <person name="Jensen L.J."/>
            <person name="Gnad F."/>
            <person name="Cox J."/>
            <person name="Jensen T.S."/>
            <person name="Nigg E.A."/>
            <person name="Brunak S."/>
            <person name="Mann M."/>
        </authorList>
    </citation>
    <scope>PHOSPHORYLATION [LARGE SCALE ANALYSIS] AT SER-175; SER-360; SER-457 AND SER-460</scope>
    <scope>IDENTIFICATION BY MASS SPECTROMETRY [LARGE SCALE ANALYSIS]</scope>
    <source>
        <tissue>Cervix carcinoma</tissue>
    </source>
</reference>
<reference key="12">
    <citation type="journal article" date="2011" name="BMC Syst. Biol.">
        <title>Initial characterization of the human central proteome.</title>
        <authorList>
            <person name="Burkard T.R."/>
            <person name="Planyavsky M."/>
            <person name="Kaupe I."/>
            <person name="Breitwieser F.P."/>
            <person name="Buerckstuemmer T."/>
            <person name="Bennett K.L."/>
            <person name="Superti-Furga G."/>
            <person name="Colinge J."/>
        </authorList>
    </citation>
    <scope>IDENTIFICATION BY MASS SPECTROMETRY [LARGE SCALE ANALYSIS]</scope>
</reference>
<reference key="13">
    <citation type="journal article" date="2011" name="Mol. Cell. Biol.">
        <title>Interferon regulatory factor 2 binding protein 2 is a new NFAT1 partner and represses its transcriptional activity.</title>
        <authorList>
            <person name="Carneiro F.R."/>
            <person name="Ramalho-Oliveira R."/>
            <person name="Mognol G.P."/>
            <person name="Viola J.P."/>
        </authorList>
    </citation>
    <scope>FUNCTION</scope>
</reference>
<reference key="14">
    <citation type="journal article" date="2011" name="PLoS ONE">
        <title>Identification of a phosphorylation-dependent nuclear localization motif in interferon regulatory factor 2 binding protein 2.</title>
        <authorList>
            <person name="Teng A.C."/>
            <person name="Al-Montashiri N.A."/>
            <person name="Cheng B.L."/>
            <person name="Lou P."/>
            <person name="Ozmizrak P."/>
            <person name="Chen H.H."/>
            <person name="Stewart A.F."/>
        </authorList>
    </citation>
    <scope>SUBCELLULAR LOCATION</scope>
    <scope>NUCLEAR LOCALIZATION SIGNAL</scope>
    <scope>PHOSPHORYLATION AT SER-360</scope>
</reference>
<reference key="15">
    <citation type="journal article" date="2011" name="Sci. Signal.">
        <title>System-wide temporal characterization of the proteome and phosphoproteome of human embryonic stem cell differentiation.</title>
        <authorList>
            <person name="Rigbolt K.T."/>
            <person name="Prokhorova T.A."/>
            <person name="Akimov V."/>
            <person name="Henningsen J."/>
            <person name="Johansen P.T."/>
            <person name="Kratchmarova I."/>
            <person name="Kassem M."/>
            <person name="Mann M."/>
            <person name="Olsen J.V."/>
            <person name="Blagoev B."/>
        </authorList>
    </citation>
    <scope>PHOSPHORYLATION [LARGE SCALE ANALYSIS] AT SER-457 AND SER-460</scope>
    <scope>IDENTIFICATION BY MASS SPECTROMETRY [LARGE SCALE ANALYSIS]</scope>
</reference>
<reference key="16">
    <citation type="journal article" date="2012" name="Proc. Natl. Acad. Sci. U.S.A.">
        <title>N-terminal acetylome analyses and functional insights of the N-terminal acetyltransferase NatB.</title>
        <authorList>
            <person name="Van Damme P."/>
            <person name="Lasa M."/>
            <person name="Polevoda B."/>
            <person name="Gazquez C."/>
            <person name="Elosegui-Artola A."/>
            <person name="Kim D.S."/>
            <person name="De Juan-Pardo E."/>
            <person name="Demeyer K."/>
            <person name="Hole K."/>
            <person name="Larrea E."/>
            <person name="Timmerman E."/>
            <person name="Prieto J."/>
            <person name="Arnesen T."/>
            <person name="Sherman F."/>
            <person name="Gevaert K."/>
            <person name="Aldabe R."/>
        </authorList>
    </citation>
    <scope>ACETYLATION [LARGE SCALE ANALYSIS] AT ALA-2</scope>
    <scope>CLEAVAGE OF INITIATOR METHIONINE [LARGE SCALE ANALYSIS]</scope>
    <scope>IDENTIFICATION BY MASS SPECTROMETRY [LARGE SCALE ANALYSIS]</scope>
</reference>
<reference key="17">
    <citation type="journal article" date="2013" name="J. Proteome Res.">
        <title>Toward a comprehensive characterization of a human cancer cell phosphoproteome.</title>
        <authorList>
            <person name="Zhou H."/>
            <person name="Di Palma S."/>
            <person name="Preisinger C."/>
            <person name="Peng M."/>
            <person name="Polat A.N."/>
            <person name="Heck A.J."/>
            <person name="Mohammed S."/>
        </authorList>
    </citation>
    <scope>PHOSPHORYLATION [LARGE SCALE ANALYSIS] AT SER-360; SER-455; SER-457 AND SER-460</scope>
    <scope>IDENTIFICATION BY MASS SPECTROMETRY [LARGE SCALE ANALYSIS]</scope>
    <source>
        <tissue>Cervix carcinoma</tissue>
        <tissue>Erythroleukemia</tissue>
    </source>
</reference>
<reference key="18">
    <citation type="journal article" date="2014" name="J. Proteomics">
        <title>An enzyme assisted RP-RPLC approach for in-depth analysis of human liver phosphoproteome.</title>
        <authorList>
            <person name="Bian Y."/>
            <person name="Song C."/>
            <person name="Cheng K."/>
            <person name="Dong M."/>
            <person name="Wang F."/>
            <person name="Huang J."/>
            <person name="Sun D."/>
            <person name="Wang L."/>
            <person name="Ye M."/>
            <person name="Zou H."/>
        </authorList>
    </citation>
    <scope>PHOSPHORYLATION [LARGE SCALE ANALYSIS] AT SER-71; SER-175 AND SER-318</scope>
    <scope>IDENTIFICATION BY MASS SPECTROMETRY [LARGE SCALE ANALYSIS]</scope>
    <source>
        <tissue>Liver</tissue>
    </source>
</reference>
<reference key="19">
    <citation type="journal article" date="2015" name="Mol. Cell. Proteomics">
        <title>System-wide analysis of SUMOylation dynamics in response to replication stress reveals novel small ubiquitin-like modified target proteins and acceptor lysines relevant for genome stability.</title>
        <authorList>
            <person name="Xiao Z."/>
            <person name="Chang J.G."/>
            <person name="Hendriks I.A."/>
            <person name="Sigurdsson J.O."/>
            <person name="Olsen J.V."/>
            <person name="Vertegaal A.C."/>
        </authorList>
    </citation>
    <scope>SUMOYLATION [LARGE SCALE ANALYSIS] AT LYS-326 (ISOFORM 2)</scope>
    <scope>IDENTIFICATION BY MASS SPECTROMETRY [LARGE SCALE ANALYSIS]</scope>
</reference>
<reference key="20">
    <citation type="journal article" date="2017" name="Nat. Struct. Mol. Biol.">
        <title>Site-specific mapping of the human SUMO proteome reveals co-modification with phosphorylation.</title>
        <authorList>
            <person name="Hendriks I.A."/>
            <person name="Lyon D."/>
            <person name="Young C."/>
            <person name="Jensen L.J."/>
            <person name="Vertegaal A.C."/>
            <person name="Nielsen M.L."/>
        </authorList>
    </citation>
    <scope>SUMOYLATION [LARGE SCALE ANALYSIS] AT LYS-289; LYS-303; LYS-324; LYS-326 AND LYS-348</scope>
    <scope>IDENTIFICATION BY MASS SPECTROMETRY [LARGE SCALE ANALYSIS]</scope>
</reference>
<reference key="21">
    <citation type="journal article" date="2016" name="J. Allergy Clin. Immunol.">
        <title>Mutation in IRF2BP2 is responsible for a familial form of common variable immunodeficiency disorder.</title>
        <authorList>
            <person name="Keller M.D."/>
            <person name="Pandey R."/>
            <person name="Li D."/>
            <person name="Glessner J."/>
            <person name="Tian L."/>
            <person name="Henrickson S.E."/>
            <person name="Chinn I.K."/>
            <person name="Monaco-Shawver L."/>
            <person name="Heimall J."/>
            <person name="Hou C."/>
            <person name="Otieno F.G."/>
            <person name="Jyonouchi S."/>
            <person name="Calabrese L."/>
            <person name="van Montfrans J."/>
            <person name="Orange J.S."/>
            <person name="Hakonarson H."/>
        </authorList>
    </citation>
    <scope>INVOLVEMENT IN CVID14</scope>
    <scope>VARIANT CVID14 ASN-551</scope>
    <scope>CHARACTERIZATION OF VARIANT CVID14 ASN-551</scope>
    <scope>FUNCTION</scope>
</reference>
<sequence>MAAAVAVAAASRRQSCYLCDLPRMPWAMIWDFTEPVCRGCVNYEGADRVEFVIETARQLKRAHGCFPEGRSPPGAAASAAAKPPPLSAKDILLQQQQQLGHGGPEAAPRAPQALERYPLAAAAERPPRLGSDFGSSRPAASLAQPPTPQPPPVNGILVPNGFSKLEEPPELNRQSPNPRRGHAVPPTLVPLMNGSATPLPTALGLGGRAAASLAAVSGTAAASLGSAQPTDLGAHKRPASVSSSAAVEHEQREAAAKEKQPPPPAHRGPADSLSTAAGAAELSAEGAGKSRGSGEQDWVNRPKTVRDTLLALHQHGHSGPFESKFKKEPALTAGRLLGFEANGANGSKAVARTARKRKPSPEPEGEVGPPKINGEAQPWLSTSTEGLKIPMTPTSSFVSPPPPTASPHSNRTTPPEAAQNGQSPMAALILVADNAGGSHASKDANQVHSTTRRNSNSPPSPSSMNQRRLGPREVGGQGAGNTGGLEPVHPASLPDSSLATSAPLCCTLCHERLEDTHFVQCPSVPSHKFCFPCSRQSIKQQGASGEVYCPSGEKCPLVGSNVPWAFMQGEIATILAGDVKVKKERDS</sequence>
<name>I2BP2_HUMAN</name>
<evidence type="ECO:0000250" key="1">
    <source>
        <dbReference type="UniProtKB" id="E9Q1P8"/>
    </source>
</evidence>
<evidence type="ECO:0000256" key="2">
    <source>
        <dbReference type="SAM" id="MobiDB-lite"/>
    </source>
</evidence>
<evidence type="ECO:0000269" key="3">
    <source>
    </source>
</evidence>
<evidence type="ECO:0000269" key="4">
    <source>
    </source>
</evidence>
<evidence type="ECO:0000269" key="5">
    <source>
    </source>
</evidence>
<evidence type="ECO:0000269" key="6">
    <source>
    </source>
</evidence>
<evidence type="ECO:0000269" key="7">
    <source>
    </source>
</evidence>
<evidence type="ECO:0000303" key="8">
    <source>
    </source>
</evidence>
<evidence type="ECO:0000303" key="9">
    <source>
    </source>
</evidence>
<evidence type="ECO:0000305" key="10"/>
<evidence type="ECO:0007744" key="11">
    <source>
    </source>
</evidence>
<evidence type="ECO:0007744" key="12">
    <source>
    </source>
</evidence>
<evidence type="ECO:0007744" key="13">
    <source>
    </source>
</evidence>
<evidence type="ECO:0007744" key="14">
    <source>
    </source>
</evidence>
<evidence type="ECO:0007744" key="15">
    <source>
    </source>
</evidence>
<evidence type="ECO:0007744" key="16">
    <source>
    </source>
</evidence>
<evidence type="ECO:0007744" key="17">
    <source>
    </source>
</evidence>
<evidence type="ECO:0007744" key="18">
    <source>
    </source>
</evidence>
<evidence type="ECO:0007744" key="19">
    <source>
    </source>
</evidence>
<evidence type="ECO:0007744" key="20">
    <source>
    </source>
</evidence>
<evidence type="ECO:0007744" key="21">
    <source>
    </source>
</evidence>
<evidence type="ECO:0007829" key="22">
    <source>
        <dbReference type="PDB" id="8YTG"/>
    </source>
</evidence>
<evidence type="ECO:0007829" key="23">
    <source>
        <dbReference type="PDB" id="8YTH"/>
    </source>
</evidence>
<comment type="function">
    <text evidence="3 4 5 7">Acts as a transcriptional corepressor in a IRF2-dependent manner; this repression is not mediated by histone deacetylase activities (PubMed:12799427). Represses the NFAT1-dependent transactivation of NFAT-responsive promoters (PubMed:21576369). Acts as a coactivator of VEGFA expression in cardiac and skeletal muscles (PubMed:20702774). Plays a role in immature B-cell differentiation (PubMed:27016798).</text>
</comment>
<comment type="subunit">
    <text evidence="3 4">Interacts with IRF2. Part of a corepressor complex containing IRF2 and IRF2BP1. Interacts with VGLL4.</text>
</comment>
<comment type="subcellular location">
    <subcellularLocation>
        <location>Cytoplasm</location>
    </subcellularLocation>
    <subcellularLocation>
        <location>Nucleus</location>
    </subcellularLocation>
</comment>
<comment type="alternative products">
    <event type="alternative splicing"/>
    <isoform>
        <id>Q7Z5L9-1</id>
        <name>1</name>
        <name>IRF-2BP2A</name>
        <sequence type="displayed"/>
    </isoform>
    <isoform>
        <id>Q7Z5L9-2</id>
        <name>2</name>
        <name>IRF-2BP2B</name>
        <sequence type="described" ref="VSP_032770"/>
    </isoform>
    <isoform>
        <id>Q7Z5L9-3</id>
        <name>3</name>
        <sequence type="described" ref="VSP_032769"/>
    </isoform>
</comment>
<comment type="domain">
    <text>The C-terminal RING-type zinc finger domain is sufficient for interaction with IRF2.</text>
</comment>
<comment type="PTM">
    <text evidence="6">Phosphorylation at Ser-360 is required for nuclear targeting.</text>
</comment>
<comment type="disease" evidence="7">
    <disease id="DI-05140">
        <name>Immunodeficiency, common variable, 14</name>
        <acronym>CVID14</acronym>
        <description>A primary immunodeficiency resulting in recurrent sinopulmonary infections since early childhood, and characterized by hypogammaglobulinemia with undetectable IgG and IgA, poor response to vaccination, and decreased levels of switched memory B cells. CVID14 inheritance is autosomal dominant.</description>
        <dbReference type="MIM" id="617765"/>
    </disease>
    <text>The disease is caused by variants affecting the gene represented in this entry.</text>
</comment>
<comment type="similarity">
    <text evidence="10">Belongs to the IRF2BP family.</text>
</comment>
<keyword id="KW-0002">3D-structure</keyword>
<keyword id="KW-0007">Acetylation</keyword>
<keyword id="KW-0010">Activator</keyword>
<keyword id="KW-0025">Alternative splicing</keyword>
<keyword id="KW-0963">Cytoplasm</keyword>
<keyword id="KW-0225">Disease variant</keyword>
<keyword id="KW-1017">Isopeptide bond</keyword>
<keyword id="KW-0479">Metal-binding</keyword>
<keyword id="KW-0539">Nucleus</keyword>
<keyword id="KW-0597">Phosphoprotein</keyword>
<keyword id="KW-1267">Proteomics identification</keyword>
<keyword id="KW-1185">Reference proteome</keyword>
<keyword id="KW-0678">Repressor</keyword>
<keyword id="KW-0804">Transcription</keyword>
<keyword id="KW-0805">Transcription regulation</keyword>
<keyword id="KW-0832">Ubl conjugation</keyword>
<keyword id="KW-0862">Zinc</keyword>
<keyword id="KW-0863">Zinc-finger</keyword>
<gene>
    <name type="primary">IRF2BP2</name>
</gene>
<organism>
    <name type="scientific">Homo sapiens</name>
    <name type="common">Human</name>
    <dbReference type="NCBI Taxonomy" id="9606"/>
    <lineage>
        <taxon>Eukaryota</taxon>
        <taxon>Metazoa</taxon>
        <taxon>Chordata</taxon>
        <taxon>Craniata</taxon>
        <taxon>Vertebrata</taxon>
        <taxon>Euteleostomi</taxon>
        <taxon>Mammalia</taxon>
        <taxon>Eutheria</taxon>
        <taxon>Euarchontoglires</taxon>
        <taxon>Primates</taxon>
        <taxon>Haplorrhini</taxon>
        <taxon>Catarrhini</taxon>
        <taxon>Hominidae</taxon>
        <taxon>Homo</taxon>
    </lineage>
</organism>
<feature type="initiator methionine" description="Removed" evidence="13 17">
    <location>
        <position position="1"/>
    </location>
</feature>
<feature type="chain" id="PRO_0000328734" description="Interferon regulatory factor 2-binding protein 2">
    <location>
        <begin position="2"/>
        <end position="587"/>
    </location>
</feature>
<feature type="zinc finger region" description="RING-type; degenerate">
    <location>
        <begin position="506"/>
        <end position="553"/>
    </location>
</feature>
<feature type="region of interest" description="Disordered" evidence="2">
    <location>
        <begin position="126"/>
        <end position="192"/>
    </location>
</feature>
<feature type="region of interest" description="Disordered" evidence="2">
    <location>
        <begin position="225"/>
        <end position="306"/>
    </location>
</feature>
<feature type="region of interest" description="Disordered" evidence="2">
    <location>
        <begin position="342"/>
        <end position="420"/>
    </location>
</feature>
<feature type="region of interest" description="Disordered" evidence="2">
    <location>
        <begin position="437"/>
        <end position="494"/>
    </location>
</feature>
<feature type="region of interest" description="Cys-rich">
    <location>
        <begin position="506"/>
        <end position="550"/>
    </location>
</feature>
<feature type="short sequence motif" description="Nuclear localization signal" evidence="6">
    <location>
        <begin position="354"/>
        <end position="361"/>
    </location>
</feature>
<feature type="compositionally biased region" description="Basic and acidic residues" evidence="2">
    <location>
        <begin position="247"/>
        <end position="260"/>
    </location>
</feature>
<feature type="compositionally biased region" description="Low complexity" evidence="2">
    <location>
        <begin position="272"/>
        <end position="287"/>
    </location>
</feature>
<feature type="compositionally biased region" description="Basic and acidic residues" evidence="2">
    <location>
        <begin position="292"/>
        <end position="306"/>
    </location>
</feature>
<feature type="compositionally biased region" description="Gly residues" evidence="2">
    <location>
        <begin position="473"/>
        <end position="483"/>
    </location>
</feature>
<feature type="modified residue" description="N-acetylalanine" evidence="13 17">
    <location>
        <position position="2"/>
    </location>
</feature>
<feature type="modified residue" description="Phosphoserine" evidence="19">
    <location>
        <position position="71"/>
    </location>
</feature>
<feature type="modified residue" description="Phosphoserine" evidence="11 15 19">
    <location>
        <position position="175"/>
    </location>
</feature>
<feature type="modified residue" description="Phosphoserine" evidence="1">
    <location>
        <position position="240"/>
    </location>
</feature>
<feature type="modified residue" description="Phosphoserine" evidence="19">
    <location>
        <position position="318"/>
    </location>
</feature>
<feature type="modified residue" description="Phosphoserine" evidence="6 11 14 15 18">
    <location>
        <position position="360"/>
    </location>
</feature>
<feature type="modified residue" description="Phosphoserine" evidence="1">
    <location>
        <position position="406"/>
    </location>
</feature>
<feature type="modified residue" description="Phosphoserine" evidence="1">
    <location>
        <position position="423"/>
    </location>
</feature>
<feature type="modified residue" description="Phosphoserine" evidence="12 18">
    <location>
        <position position="455"/>
    </location>
</feature>
<feature type="modified residue" description="Phosphoserine" evidence="12 15 16 18">
    <location>
        <position position="457"/>
    </location>
</feature>
<feature type="modified residue" description="Phosphoserine" evidence="12 15 16 18">
    <location>
        <position position="460"/>
    </location>
</feature>
<feature type="cross-link" description="Glycyl lysine isopeptide (Lys-Gly) (interchain with G-Cter in SUMO2)" evidence="21">
    <location>
        <position position="289"/>
    </location>
</feature>
<feature type="cross-link" description="Glycyl lysine isopeptide (Lys-Gly) (interchain with G-Cter in SUMO2)" evidence="21">
    <location>
        <position position="303"/>
    </location>
</feature>
<feature type="cross-link" description="Glycyl lysine isopeptide (Lys-Gly) (interchain with G-Cter in SUMO2)" evidence="21">
    <location>
        <position position="324"/>
    </location>
</feature>
<feature type="cross-link" description="Glycyl lysine isopeptide (Lys-Gly) (interchain with G-Cter in SUMO2)" evidence="21">
    <location>
        <position position="326"/>
    </location>
</feature>
<feature type="cross-link" description="Glycyl lysine isopeptide (Lys-Gly) (interchain with G-Cter in SUMO2)" evidence="21">
    <location>
        <position position="348"/>
    </location>
</feature>
<feature type="splice variant" id="VSP_032769" description="In isoform 3." evidence="9">
    <location>
        <begin position="1"/>
        <end position="424"/>
    </location>
</feature>
<feature type="splice variant" id="VSP_032770" description="In isoform 2." evidence="8">
    <location>
        <begin position="333"/>
        <end position="348"/>
    </location>
</feature>
<feature type="sequence variant" id="VAR_042503" description="In dbSNP:rs11502.">
    <original>A</original>
    <variation>V</variation>
    <location>
        <position position="254"/>
    </location>
</feature>
<feature type="sequence variant" id="VAR_080578" description="In CVID14; increased protein abundance in patient-derived B lymphocytes; impairs immature B cell differentiation; dbSNP:rs1553319504." evidence="7">
    <original>S</original>
    <variation>N</variation>
    <location>
        <position position="551"/>
    </location>
</feature>
<feature type="sequence conflict" description="In Ref. 1; AAP78944/AAP78945." evidence="10" ref="1">
    <original>N</original>
    <variation>K</variation>
    <location>
        <position position="177"/>
    </location>
</feature>
<feature type="sequence conflict" description="In Ref. 1; AAP78944/AAP78945." evidence="10" ref="1">
    <original>A</original>
    <variation>T</variation>
    <location>
        <position position="183"/>
    </location>
</feature>
<feature type="sequence conflict" description="In Ref. 1; AAP78944/AAP78945." evidence="10" ref="1">
    <original>A</original>
    <variation>T</variation>
    <location>
        <position position="246"/>
    </location>
</feature>
<feature type="turn" evidence="22">
    <location>
        <begin position="507"/>
        <end position="509"/>
    </location>
</feature>
<feature type="strand" evidence="23">
    <location>
        <begin position="514"/>
        <end position="516"/>
    </location>
</feature>
<feature type="strand" evidence="22">
    <location>
        <begin position="518"/>
        <end position="520"/>
    </location>
</feature>
<feature type="strand" evidence="22">
    <location>
        <begin position="528"/>
        <end position="530"/>
    </location>
</feature>
<feature type="helix" evidence="22">
    <location>
        <begin position="531"/>
        <end position="542"/>
    </location>
</feature>
<feature type="strand" evidence="22">
    <location>
        <begin position="560"/>
        <end position="563"/>
    </location>
</feature>
<feature type="helix" evidence="22">
    <location>
        <begin position="568"/>
        <end position="575"/>
    </location>
</feature>
<feature type="cross-link" description="Glycyl lysine isopeptide (Lys-Gly) (interchain with G-Cter in SUMO2)" evidence="20">
    <location sequence="Q7Z5L9-2">
        <position position="326"/>
    </location>
</feature>
<proteinExistence type="evidence at protein level"/>
<accession>Q7Z5L9</accession>
<accession>B1AM35</accession>
<accession>B1AM36</accession>
<accession>Q6P083</accession>
<accession>Q7Z5L8</accession>
<accession>Q8N351</accession>
<accession>Q8WUH8</accession>